<name>LIS12_PODAN</name>
<gene>
    <name evidence="1" type="primary">PAC1-2</name>
    <name evidence="1" type="synonym">LIS1-2</name>
    <name type="ordered locus">Pa_2_10070</name>
    <name type="ORF">PODANS_2_10070</name>
</gene>
<evidence type="ECO:0000255" key="1">
    <source>
        <dbReference type="HAMAP-Rule" id="MF_03141"/>
    </source>
</evidence>
<dbReference type="EMBL" id="CU640366">
    <property type="protein sequence ID" value="CAP73644.1"/>
    <property type="molecule type" value="Genomic_DNA"/>
</dbReference>
<dbReference type="EMBL" id="FO904937">
    <property type="protein sequence ID" value="CDP26047.1"/>
    <property type="molecule type" value="Genomic_DNA"/>
</dbReference>
<dbReference type="RefSeq" id="XP_001911816.1">
    <property type="nucleotide sequence ID" value="XM_001911781.1"/>
</dbReference>
<dbReference type="SMR" id="B2B766"/>
<dbReference type="FunCoup" id="B2B766">
    <property type="interactions" value="46"/>
</dbReference>
<dbReference type="STRING" id="515849.B2B766"/>
<dbReference type="GeneID" id="6195508"/>
<dbReference type="KEGG" id="pan:PODANSg8861"/>
<dbReference type="VEuPathDB" id="FungiDB:PODANS_2_10070"/>
<dbReference type="eggNOG" id="KOG0295">
    <property type="taxonomic scope" value="Eukaryota"/>
</dbReference>
<dbReference type="HOGENOM" id="CLU_000288_57_15_1"/>
<dbReference type="InParanoid" id="B2B766"/>
<dbReference type="OrthoDB" id="10264588at2759"/>
<dbReference type="Proteomes" id="UP000001197">
    <property type="component" value="Chromosome 2"/>
</dbReference>
<dbReference type="GO" id="GO:0005737">
    <property type="term" value="C:cytoplasm"/>
    <property type="evidence" value="ECO:0007669"/>
    <property type="project" value="UniProtKB-UniRule"/>
</dbReference>
<dbReference type="GO" id="GO:0005874">
    <property type="term" value="C:microtubule"/>
    <property type="evidence" value="ECO:0007669"/>
    <property type="project" value="UniProtKB-KW"/>
</dbReference>
<dbReference type="GO" id="GO:0005875">
    <property type="term" value="C:microtubule associated complex"/>
    <property type="evidence" value="ECO:0007669"/>
    <property type="project" value="UniProtKB-UniRule"/>
</dbReference>
<dbReference type="GO" id="GO:0000922">
    <property type="term" value="C:spindle pole"/>
    <property type="evidence" value="ECO:0007669"/>
    <property type="project" value="UniProtKB-SubCell"/>
</dbReference>
<dbReference type="GO" id="GO:0070840">
    <property type="term" value="F:dynein complex binding"/>
    <property type="evidence" value="ECO:0007669"/>
    <property type="project" value="UniProtKB-UniRule"/>
</dbReference>
<dbReference type="GO" id="GO:0051301">
    <property type="term" value="P:cell division"/>
    <property type="evidence" value="ECO:0007669"/>
    <property type="project" value="UniProtKB-KW"/>
</dbReference>
<dbReference type="GO" id="GO:0000132">
    <property type="term" value="P:establishment of mitotic spindle orientation"/>
    <property type="evidence" value="ECO:0007669"/>
    <property type="project" value="UniProtKB-UniRule"/>
</dbReference>
<dbReference type="GO" id="GO:0051012">
    <property type="term" value="P:microtubule sliding"/>
    <property type="evidence" value="ECO:0007669"/>
    <property type="project" value="UniProtKB-UniRule"/>
</dbReference>
<dbReference type="CDD" id="cd00200">
    <property type="entry name" value="WD40"/>
    <property type="match status" value="1"/>
</dbReference>
<dbReference type="FunFam" id="2.130.10.10:FF:000342">
    <property type="entry name" value="Nuclear distribution protein PAC1"/>
    <property type="match status" value="1"/>
</dbReference>
<dbReference type="FunFam" id="1.20.960.30:FF:000002">
    <property type="entry name" value="Platelet-activating factor acetylhydrolase ib"/>
    <property type="match status" value="1"/>
</dbReference>
<dbReference type="Gene3D" id="1.20.960.30">
    <property type="match status" value="1"/>
</dbReference>
<dbReference type="Gene3D" id="2.130.10.10">
    <property type="entry name" value="YVTN repeat-like/Quinoprotein amine dehydrogenase"/>
    <property type="match status" value="1"/>
</dbReference>
<dbReference type="HAMAP" id="MF_03141">
    <property type="entry name" value="lis1"/>
    <property type="match status" value="1"/>
</dbReference>
<dbReference type="InterPro" id="IPR017252">
    <property type="entry name" value="Dynein_regulator_LIS1"/>
</dbReference>
<dbReference type="InterPro" id="IPR020472">
    <property type="entry name" value="G-protein_beta_WD-40_rep"/>
</dbReference>
<dbReference type="InterPro" id="IPR037190">
    <property type="entry name" value="LIS1_N"/>
</dbReference>
<dbReference type="InterPro" id="IPR056795">
    <property type="entry name" value="PAC1-like_LisH-like_dom"/>
</dbReference>
<dbReference type="InterPro" id="IPR015943">
    <property type="entry name" value="WD40/YVTN_repeat-like_dom_sf"/>
</dbReference>
<dbReference type="InterPro" id="IPR019775">
    <property type="entry name" value="WD40_repeat_CS"/>
</dbReference>
<dbReference type="InterPro" id="IPR036322">
    <property type="entry name" value="WD40_repeat_dom_sf"/>
</dbReference>
<dbReference type="InterPro" id="IPR001680">
    <property type="entry name" value="WD40_rpt"/>
</dbReference>
<dbReference type="PANTHER" id="PTHR19848:SF8">
    <property type="entry name" value="F-BOX AND WD REPEAT DOMAIN CONTAINING 7"/>
    <property type="match status" value="1"/>
</dbReference>
<dbReference type="PANTHER" id="PTHR19848">
    <property type="entry name" value="WD40 REPEAT PROTEIN"/>
    <property type="match status" value="1"/>
</dbReference>
<dbReference type="Pfam" id="PF24951">
    <property type="entry name" value="LisH_PAC1"/>
    <property type="match status" value="1"/>
</dbReference>
<dbReference type="Pfam" id="PF00400">
    <property type="entry name" value="WD40"/>
    <property type="match status" value="6"/>
</dbReference>
<dbReference type="PIRSF" id="PIRSF037647">
    <property type="entry name" value="Dynein_regulator_Lis1"/>
    <property type="match status" value="1"/>
</dbReference>
<dbReference type="PRINTS" id="PR00320">
    <property type="entry name" value="GPROTEINBRPT"/>
</dbReference>
<dbReference type="SMART" id="SM00320">
    <property type="entry name" value="WD40"/>
    <property type="match status" value="7"/>
</dbReference>
<dbReference type="SUPFAM" id="SSF109925">
    <property type="entry name" value="Lissencephaly-1 protein (Lis-1, PAF-AH alpha) N-terminal domain"/>
    <property type="match status" value="1"/>
</dbReference>
<dbReference type="SUPFAM" id="SSF50978">
    <property type="entry name" value="WD40 repeat-like"/>
    <property type="match status" value="1"/>
</dbReference>
<dbReference type="PROSITE" id="PS00678">
    <property type="entry name" value="WD_REPEATS_1"/>
    <property type="match status" value="2"/>
</dbReference>
<dbReference type="PROSITE" id="PS50082">
    <property type="entry name" value="WD_REPEATS_2"/>
    <property type="match status" value="6"/>
</dbReference>
<dbReference type="PROSITE" id="PS50294">
    <property type="entry name" value="WD_REPEATS_REGION"/>
    <property type="match status" value="1"/>
</dbReference>
<feature type="chain" id="PRO_0000405097" description="Nuclear distribution protein PAC1-2">
    <location>
        <begin position="1"/>
        <end position="468"/>
    </location>
</feature>
<feature type="domain" description="LisH" evidence="1">
    <location>
        <begin position="13"/>
        <end position="45"/>
    </location>
</feature>
<feature type="repeat" description="WD 1">
    <location>
        <begin position="118"/>
        <end position="159"/>
    </location>
</feature>
<feature type="repeat" description="WD 2">
    <location>
        <begin position="161"/>
        <end position="201"/>
    </location>
</feature>
<feature type="repeat" description="WD 3">
    <location>
        <begin position="205"/>
        <end position="251"/>
    </location>
</feature>
<feature type="repeat" description="WD 4">
    <location>
        <begin position="254"/>
        <end position="293"/>
    </location>
</feature>
<feature type="repeat" description="WD 5">
    <location>
        <begin position="298"/>
        <end position="358"/>
    </location>
</feature>
<feature type="repeat" description="WD 6">
    <location>
        <begin position="360"/>
        <end position="399"/>
    </location>
</feature>
<feature type="repeat" description="WD 7">
    <location>
        <begin position="404"/>
        <end position="429"/>
    </location>
</feature>
<feature type="repeat" description="WD 8">
    <location>
        <begin position="430"/>
        <end position="468"/>
    </location>
</feature>
<feature type="coiled-coil region" evidence="1">
    <location>
        <begin position="66"/>
        <end position="92"/>
    </location>
</feature>
<accession>B2B766</accession>
<accession>A0A090CK24</accession>
<keyword id="KW-0131">Cell cycle</keyword>
<keyword id="KW-0132">Cell division</keyword>
<keyword id="KW-0175">Coiled coil</keyword>
<keyword id="KW-0963">Cytoplasm</keyword>
<keyword id="KW-0206">Cytoskeleton</keyword>
<keyword id="KW-0493">Microtubule</keyword>
<keyword id="KW-0498">Mitosis</keyword>
<keyword id="KW-1185">Reference proteome</keyword>
<keyword id="KW-0677">Repeat</keyword>
<keyword id="KW-0813">Transport</keyword>
<keyword id="KW-0853">WD repeat</keyword>
<comment type="function">
    <text evidence="1">Positively regulates the activity of the minus-end directed microtubule motor protein dynein. May enhance dynein-mediated microtubule sliding by targeting dynein to the microtubule plus end. Required for nuclear migration during vegetative growth as well as development. Required for retrograde early endosome (EE) transport from the hyphal tip. Required for localization of dynein to the mitotic spindle poles. Recruits additional proteins to the dynein complex at SPBs.</text>
</comment>
<comment type="subunit">
    <text evidence="1">Self-associates. Interacts with NDL1 and dynein.</text>
</comment>
<comment type="subcellular location">
    <subcellularLocation>
        <location evidence="1">Cytoplasm</location>
        <location evidence="1">Cytoskeleton</location>
    </subcellularLocation>
    <subcellularLocation>
        <location evidence="1">Cytoplasm</location>
        <location evidence="1">Cytoskeleton</location>
        <location evidence="1">Spindle pole</location>
    </subcellularLocation>
    <text evidence="1">Localizes to the plus ends of microtubules at the hyphal tip and the mitotic spindle poles.</text>
</comment>
<comment type="domain">
    <text evidence="1">Dimerization mediated by the LisH domain may be required to activate dynein.</text>
</comment>
<comment type="similarity">
    <text evidence="1">Belongs to the WD repeat LIS1/nudF family.</text>
</comment>
<sequence length="468" mass="51164">MTMASRSFLTDRQAEELHKSIIAYLTSLNLATTANTLRAELNLPEETFDLAKAKQYEGLLEKKWTSVIRLQKKVLDLQAENAHLKNEIENAGPLALSRKNQDPANWLPKGPPRYTLEGHRLPITSVAFHPVFSSLASASEDNTIKIWDWELGELERTLKGHTKAVLDVDFGGPRGNTLLASCSSDMSIKLWDPADQYKNIRTLHGHDHIVSSVRFVPANGTAGAGGNLLVSASKDNTLKLWDVTTGYCVKTIEGHNDWPRAVAPSADGRWLLSTGSDKAARLWDIGGTEPECRVVMFGHENFNLCCEFAPSTSYPHLARLAGHEKVPPANSAAEFMATGSRDKQIRLWDRRGQCIKVLEGHDNWVRGLAFHPAGKFLISVADDRTMRCWDLSQDGKCVQTLSGMFDGFVSCVRWAPGITKDGLAGGDAGDGTPKKKTGAEANGGVQMRCVVATGSVDGTEGKVRIFAN</sequence>
<proteinExistence type="inferred from homology"/>
<organism>
    <name type="scientific">Podospora anserina (strain S / ATCC MYA-4624 / DSM 980 / FGSC 10383)</name>
    <name type="common">Pleurage anserina</name>
    <dbReference type="NCBI Taxonomy" id="515849"/>
    <lineage>
        <taxon>Eukaryota</taxon>
        <taxon>Fungi</taxon>
        <taxon>Dikarya</taxon>
        <taxon>Ascomycota</taxon>
        <taxon>Pezizomycotina</taxon>
        <taxon>Sordariomycetes</taxon>
        <taxon>Sordariomycetidae</taxon>
        <taxon>Sordariales</taxon>
        <taxon>Podosporaceae</taxon>
        <taxon>Podospora</taxon>
        <taxon>Podospora anserina</taxon>
    </lineage>
</organism>
<protein>
    <recommendedName>
        <fullName evidence="1">Nuclear distribution protein PAC1-2</fullName>
    </recommendedName>
    <alternativeName>
        <fullName evidence="1">Lissencephaly-1 homolog 2</fullName>
        <shortName evidence="1">LIS-1 2</shortName>
    </alternativeName>
    <alternativeName>
        <fullName evidence="1">nudF homolog 2</fullName>
    </alternativeName>
</protein>
<reference key="1">
    <citation type="journal article" date="2008" name="Genome Biol.">
        <title>The genome sequence of the model ascomycete fungus Podospora anserina.</title>
        <authorList>
            <person name="Espagne E."/>
            <person name="Lespinet O."/>
            <person name="Malagnac F."/>
            <person name="Da Silva C."/>
            <person name="Jaillon O."/>
            <person name="Porcel B.M."/>
            <person name="Couloux A."/>
            <person name="Aury J.-M."/>
            <person name="Segurens B."/>
            <person name="Poulain J."/>
            <person name="Anthouard V."/>
            <person name="Grossetete S."/>
            <person name="Khalili H."/>
            <person name="Coppin E."/>
            <person name="Dequard-Chablat M."/>
            <person name="Picard M."/>
            <person name="Contamine V."/>
            <person name="Arnaise S."/>
            <person name="Bourdais A."/>
            <person name="Berteaux-Lecellier V."/>
            <person name="Gautheret D."/>
            <person name="de Vries R.P."/>
            <person name="Battaglia E."/>
            <person name="Coutinho P.M."/>
            <person name="Danchin E.G.J."/>
            <person name="Henrissat B."/>
            <person name="El Khoury R."/>
            <person name="Sainsard-Chanet A."/>
            <person name="Boivin A."/>
            <person name="Pinan-Lucarre B."/>
            <person name="Sellem C.H."/>
            <person name="Debuchy R."/>
            <person name="Wincker P."/>
            <person name="Weissenbach J."/>
            <person name="Silar P."/>
        </authorList>
    </citation>
    <scope>NUCLEOTIDE SEQUENCE [LARGE SCALE GENOMIC DNA]</scope>
    <source>
        <strain>S / ATCC MYA-4624 / DSM 980 / FGSC 10383</strain>
    </source>
</reference>
<reference key="2">
    <citation type="journal article" date="2014" name="Genetics">
        <title>Maintaining two mating types: Structure of the mating type locus and its role in heterokaryosis in Podospora anserina.</title>
        <authorList>
            <person name="Grognet P."/>
            <person name="Bidard F."/>
            <person name="Kuchly C."/>
            <person name="Tong L.C.H."/>
            <person name="Coppin E."/>
            <person name="Benkhali J.A."/>
            <person name="Couloux A."/>
            <person name="Wincker P."/>
            <person name="Debuchy R."/>
            <person name="Silar P."/>
        </authorList>
    </citation>
    <scope>GENOME REANNOTATION</scope>
    <source>
        <strain>S / ATCC MYA-4624 / DSM 980 / FGSC 10383</strain>
    </source>
</reference>